<proteinExistence type="inferred from homology"/>
<keyword id="KW-0150">Chloroplast</keyword>
<keyword id="KW-0934">Plastid</keyword>
<keyword id="KW-1185">Reference proteome</keyword>
<keyword id="KW-0687">Ribonucleoprotein</keyword>
<keyword id="KW-0689">Ribosomal protein</keyword>
<keyword id="KW-0694">RNA-binding</keyword>
<keyword id="KW-0699">rRNA-binding</keyword>
<feature type="chain" id="PRO_0000125315" description="Large ribosomal subunit protein uL22c">
    <location>
        <begin position="1"/>
        <end position="149"/>
    </location>
</feature>
<evidence type="ECO:0000250" key="1"/>
<evidence type="ECO:0000305" key="2"/>
<evidence type="ECO:0000312" key="3">
    <source>
        <dbReference type="Proteomes" id="UP000006591"/>
    </source>
</evidence>
<geneLocation type="chloroplast"/>
<dbReference type="EMBL" id="AP006728">
    <property type="protein sequence ID" value="BAD26818.1"/>
    <property type="molecule type" value="Genomic_DNA"/>
</dbReference>
<dbReference type="RefSeq" id="YP_052789.1">
    <property type="nucleotide sequence ID" value="NC_005973.1"/>
</dbReference>
<dbReference type="SMR" id="Q6END4"/>
<dbReference type="STRING" id="4536.Q6END4"/>
<dbReference type="GeneID" id="2885899"/>
<dbReference type="eggNOG" id="KOG0899">
    <property type="taxonomic scope" value="Eukaryota"/>
</dbReference>
<dbReference type="eggNOG" id="KOG1711">
    <property type="taxonomic scope" value="Eukaryota"/>
</dbReference>
<dbReference type="Proteomes" id="UP000006591">
    <property type="component" value="Chloroplast"/>
</dbReference>
<dbReference type="GO" id="GO:0009507">
    <property type="term" value="C:chloroplast"/>
    <property type="evidence" value="ECO:0007669"/>
    <property type="project" value="UniProtKB-SubCell"/>
</dbReference>
<dbReference type="GO" id="GO:0015934">
    <property type="term" value="C:large ribosomal subunit"/>
    <property type="evidence" value="ECO:0007669"/>
    <property type="project" value="InterPro"/>
</dbReference>
<dbReference type="GO" id="GO:0009536">
    <property type="term" value="C:plastid"/>
    <property type="evidence" value="ECO:0000305"/>
    <property type="project" value="Gramene"/>
</dbReference>
<dbReference type="GO" id="GO:0019843">
    <property type="term" value="F:rRNA binding"/>
    <property type="evidence" value="ECO:0007669"/>
    <property type="project" value="UniProtKB-UniRule"/>
</dbReference>
<dbReference type="GO" id="GO:0003735">
    <property type="term" value="F:structural constituent of ribosome"/>
    <property type="evidence" value="ECO:0007669"/>
    <property type="project" value="InterPro"/>
</dbReference>
<dbReference type="GO" id="GO:0006412">
    <property type="term" value="P:translation"/>
    <property type="evidence" value="ECO:0007669"/>
    <property type="project" value="UniProtKB-UniRule"/>
</dbReference>
<dbReference type="CDD" id="cd00336">
    <property type="entry name" value="Ribosomal_L22"/>
    <property type="match status" value="1"/>
</dbReference>
<dbReference type="FunFam" id="3.90.470.10:FF:000004">
    <property type="entry name" value="50S ribosomal protein L22, chloroplastic"/>
    <property type="match status" value="1"/>
</dbReference>
<dbReference type="Gene3D" id="3.90.470.10">
    <property type="entry name" value="Ribosomal protein L22/L17"/>
    <property type="match status" value="1"/>
</dbReference>
<dbReference type="HAMAP" id="MF_01331_B">
    <property type="entry name" value="Ribosomal_uL22_B"/>
    <property type="match status" value="1"/>
</dbReference>
<dbReference type="InterPro" id="IPR001063">
    <property type="entry name" value="Ribosomal_uL22"/>
</dbReference>
<dbReference type="InterPro" id="IPR005727">
    <property type="entry name" value="Ribosomal_uL22_bac/chlpt-type"/>
</dbReference>
<dbReference type="InterPro" id="IPR047867">
    <property type="entry name" value="Ribosomal_uL22_bac/org-type"/>
</dbReference>
<dbReference type="InterPro" id="IPR018260">
    <property type="entry name" value="Ribosomal_uL22_CS"/>
</dbReference>
<dbReference type="InterPro" id="IPR036394">
    <property type="entry name" value="Ribosomal_uL22_sf"/>
</dbReference>
<dbReference type="NCBIfam" id="TIGR01044">
    <property type="entry name" value="rplV_bact"/>
    <property type="match status" value="1"/>
</dbReference>
<dbReference type="PANTHER" id="PTHR13501">
    <property type="entry name" value="CHLOROPLAST 50S RIBOSOMAL PROTEIN L22-RELATED"/>
    <property type="match status" value="1"/>
</dbReference>
<dbReference type="PANTHER" id="PTHR13501:SF10">
    <property type="entry name" value="LARGE RIBOSOMAL SUBUNIT PROTEIN UL22M"/>
    <property type="match status" value="1"/>
</dbReference>
<dbReference type="Pfam" id="PF00237">
    <property type="entry name" value="Ribosomal_L22"/>
    <property type="match status" value="1"/>
</dbReference>
<dbReference type="SUPFAM" id="SSF54843">
    <property type="entry name" value="Ribosomal protein L22"/>
    <property type="match status" value="1"/>
</dbReference>
<dbReference type="PROSITE" id="PS00464">
    <property type="entry name" value="RIBOSOMAL_L22"/>
    <property type="match status" value="1"/>
</dbReference>
<sequence>MTSFKLVKYTPRIKKKKSGLRKLARKVPTDRLLKFERVFKAQKRIHMSVFKVQRVLDEIRWRYYEETVMILNLMPYRASYPILKLVYSAAANATHYRDFDKANLFITKAEVSRSTIMNKFRPRARGRSSPIKKTMCHITIVLNIVKKSK</sequence>
<protein>
    <recommendedName>
        <fullName evidence="2">Large ribosomal subunit protein uL22c</fullName>
    </recommendedName>
    <alternativeName>
        <fullName>50S ribosomal protein L22, chloroplastic</fullName>
    </alternativeName>
</protein>
<organism>
    <name type="scientific">Oryza nivara</name>
    <name type="common">Indian wild rice</name>
    <name type="synonym">Oryza sativa f. spontanea</name>
    <dbReference type="NCBI Taxonomy" id="4536"/>
    <lineage>
        <taxon>Eukaryota</taxon>
        <taxon>Viridiplantae</taxon>
        <taxon>Streptophyta</taxon>
        <taxon>Embryophyta</taxon>
        <taxon>Tracheophyta</taxon>
        <taxon>Spermatophyta</taxon>
        <taxon>Magnoliopsida</taxon>
        <taxon>Liliopsida</taxon>
        <taxon>Poales</taxon>
        <taxon>Poaceae</taxon>
        <taxon>BOP clade</taxon>
        <taxon>Oryzoideae</taxon>
        <taxon>Oryzeae</taxon>
        <taxon>Oryzinae</taxon>
        <taxon>Oryza</taxon>
    </lineage>
</organism>
<accession>Q6END4</accession>
<name>RK22_ORYNI</name>
<comment type="function">
    <text evidence="1">This protein binds specifically to 23S rRNA.</text>
</comment>
<comment type="function">
    <text evidence="1">The globular domain of the protein is located near the polypeptide exit tunnel on the outside of the subunit, while an extended beta-hairpin is found that lines the wall of the exit tunnel in the center of the 70S ribosome.</text>
</comment>
<comment type="subunit">
    <text evidence="1">Part of the 50S ribosomal subunit.</text>
</comment>
<comment type="subcellular location">
    <subcellularLocation>
        <location>Plastid</location>
        <location>Chloroplast</location>
    </subcellularLocation>
</comment>
<comment type="similarity">
    <text evidence="2">Belongs to the universal ribosomal protein uL22 family.</text>
</comment>
<gene>
    <name type="primary">rpl22</name>
</gene>
<reference key="1">
    <citation type="journal article" date="2004" name="Gene">
        <title>The complete nucleotide sequence of wild rice (Oryza nivara) chloroplast genome: first genome wide comparative sequence analysis of wild and cultivated rice.</title>
        <authorList>
            <person name="Masood M.S."/>
            <person name="Nishikawa T."/>
            <person name="Fukuoka S."/>
            <person name="Njenga P.K."/>
            <person name="Tsudzuki T."/>
            <person name="Kadowaki K."/>
        </authorList>
    </citation>
    <scope>NUCLEOTIDE SEQUENCE [LARGE SCALE GENOMIC DNA]</scope>
    <source>
        <strain evidence="3">cv. SL10</strain>
    </source>
</reference>